<evidence type="ECO:0000250" key="1"/>
<evidence type="ECO:0000250" key="2">
    <source>
        <dbReference type="UniProtKB" id="Q9FMF5"/>
    </source>
</evidence>
<evidence type="ECO:0000255" key="3">
    <source>
        <dbReference type="PROSITE-ProRule" id="PRU00037"/>
    </source>
</evidence>
<evidence type="ECO:0000255" key="4">
    <source>
        <dbReference type="PROSITE-ProRule" id="PRU00982"/>
    </source>
</evidence>
<evidence type="ECO:0000256" key="5">
    <source>
        <dbReference type="SAM" id="MobiDB-lite"/>
    </source>
</evidence>
<evidence type="ECO:0000269" key="6">
    <source>
    </source>
</evidence>
<evidence type="ECO:0000305" key="7"/>
<organism>
    <name type="scientific">Arabidopsis thaliana</name>
    <name type="common">Mouse-ear cress</name>
    <dbReference type="NCBI Taxonomy" id="3702"/>
    <lineage>
        <taxon>Eukaryota</taxon>
        <taxon>Viridiplantae</taxon>
        <taxon>Streptophyta</taxon>
        <taxon>Embryophyta</taxon>
        <taxon>Tracheophyta</taxon>
        <taxon>Spermatophyta</taxon>
        <taxon>Magnoliopsida</taxon>
        <taxon>eudicotyledons</taxon>
        <taxon>Gunneridae</taxon>
        <taxon>Pentapetalae</taxon>
        <taxon>rosids</taxon>
        <taxon>malvids</taxon>
        <taxon>Brassicales</taxon>
        <taxon>Brassicaceae</taxon>
        <taxon>Camelineae</taxon>
        <taxon>Arabidopsis</taxon>
    </lineage>
</organism>
<comment type="function">
    <text evidence="1">May act as a substrate-specific adapter of an E3 ubiquitin-protein ligase complex (CUL3-RBX1-BTB) which mediates the ubiquitination and subsequent proteasomal degradation of target proteins.</text>
</comment>
<comment type="pathway">
    <text>Protein modification; protein ubiquitination.</text>
</comment>
<comment type="domain">
    <text evidence="6">The BTB/POZ domain mediates the interaction with some component of ubiquitin ligase complexes.</text>
</comment>
<comment type="similarity">
    <text evidence="4">Belongs to the NPH3 family.</text>
</comment>
<comment type="sequence caution" evidence="7">
    <conflict type="erroneous gene model prediction">
        <sequence resource="EMBL-CDS" id="BAB10932"/>
    </conflict>
</comment>
<dbReference type="EMBL" id="AB013389">
    <property type="protein sequence ID" value="BAB10932.1"/>
    <property type="status" value="ALT_SEQ"/>
    <property type="molecule type" value="Genomic_DNA"/>
</dbReference>
<dbReference type="EMBL" id="CP002688">
    <property type="protein sequence ID" value="AED98229.1"/>
    <property type="molecule type" value="Genomic_DNA"/>
</dbReference>
<dbReference type="EMBL" id="AY049300">
    <property type="protein sequence ID" value="AAK83642.1"/>
    <property type="molecule type" value="mRNA"/>
</dbReference>
<dbReference type="EMBL" id="BT001071">
    <property type="protein sequence ID" value="AAN46836.1"/>
    <property type="molecule type" value="mRNA"/>
</dbReference>
<dbReference type="RefSeq" id="NP_201457.1">
    <property type="nucleotide sequence ID" value="NM_126054.2"/>
</dbReference>
<dbReference type="BioGRID" id="22030">
    <property type="interactions" value="3"/>
</dbReference>
<dbReference type="IntAct" id="Q94A73">
    <property type="interactions" value="3"/>
</dbReference>
<dbReference type="STRING" id="3702.Q94A73"/>
<dbReference type="iPTMnet" id="Q94A73"/>
<dbReference type="PaxDb" id="3702-AT5G66560.1"/>
<dbReference type="ProteomicsDB" id="242893"/>
<dbReference type="EnsemblPlants" id="AT5G66560.1">
    <property type="protein sequence ID" value="AT5G66560.1"/>
    <property type="gene ID" value="AT5G66560"/>
</dbReference>
<dbReference type="GeneID" id="836788"/>
<dbReference type="Gramene" id="AT5G66560.1">
    <property type="protein sequence ID" value="AT5G66560.1"/>
    <property type="gene ID" value="AT5G66560"/>
</dbReference>
<dbReference type="KEGG" id="ath:AT5G66560"/>
<dbReference type="Araport" id="AT5G66560"/>
<dbReference type="TAIR" id="AT5G66560"/>
<dbReference type="eggNOG" id="ENOG502QUA3">
    <property type="taxonomic scope" value="Eukaryota"/>
</dbReference>
<dbReference type="HOGENOM" id="CLU_005994_6_2_1"/>
<dbReference type="InParanoid" id="Q94A73"/>
<dbReference type="OMA" id="ESCLMSY"/>
<dbReference type="UniPathway" id="UPA00143"/>
<dbReference type="PRO" id="PR:Q94A73"/>
<dbReference type="Proteomes" id="UP000006548">
    <property type="component" value="Chromosome 5"/>
</dbReference>
<dbReference type="ExpressionAtlas" id="Q94A73">
    <property type="expression patterns" value="baseline and differential"/>
</dbReference>
<dbReference type="GO" id="GO:0016567">
    <property type="term" value="P:protein ubiquitination"/>
    <property type="evidence" value="ECO:0007669"/>
    <property type="project" value="UniProtKB-UniPathway"/>
</dbReference>
<dbReference type="Gene3D" id="3.30.710.10">
    <property type="entry name" value="Potassium Channel Kv1.1, Chain A"/>
    <property type="match status" value="1"/>
</dbReference>
<dbReference type="InterPro" id="IPR000210">
    <property type="entry name" value="BTB/POZ_dom"/>
</dbReference>
<dbReference type="InterPro" id="IPR043454">
    <property type="entry name" value="NPH3/RPT2-like"/>
</dbReference>
<dbReference type="InterPro" id="IPR027356">
    <property type="entry name" value="NPH3_dom"/>
</dbReference>
<dbReference type="InterPro" id="IPR011333">
    <property type="entry name" value="SKP1/BTB/POZ_sf"/>
</dbReference>
<dbReference type="PANTHER" id="PTHR32370">
    <property type="entry name" value="OS12G0117600 PROTEIN"/>
    <property type="match status" value="1"/>
</dbReference>
<dbReference type="Pfam" id="PF03000">
    <property type="entry name" value="NPH3"/>
    <property type="match status" value="1"/>
</dbReference>
<dbReference type="SMART" id="SM00225">
    <property type="entry name" value="BTB"/>
    <property type="match status" value="1"/>
</dbReference>
<dbReference type="SUPFAM" id="SSF54695">
    <property type="entry name" value="POZ domain"/>
    <property type="match status" value="1"/>
</dbReference>
<dbReference type="PROSITE" id="PS50097">
    <property type="entry name" value="BTB"/>
    <property type="match status" value="1"/>
</dbReference>
<dbReference type="PROSITE" id="PS51649">
    <property type="entry name" value="NPH3"/>
    <property type="match status" value="1"/>
</dbReference>
<sequence length="668" mass="74540">MASEKSTSKGQAWFCTTGLPSDIEIEVDDMTFHLHKFPLMSKSRKLHRLITEQETRSSSSMALITVIDPKVEETDKKGKGHEIEDDKEEEEVEEQEIEENGYPHIKLEDFPGSSESFEMVAKFCYGVKMDLSASTVVPLRCAAEHLEMTEEYSPDNLISKTERFLSHSVYKSLRESIKALKACESVSPLAGSLGITEQCIDSIVSRASSADPSLFGWPVNDGGGRGNISATDLQLIPGGAAKSRKKPSRDSNMELWFEDLTQLSLPIFKTVILSMRSGDLSSDIIESCLICYAKKHIPGILRSNRKPPSSSSTAVSENEQRELLETITSNLPLDKSSISSTTRFLFGLLRTAIILNAAEICRDLLERKIGSQLERATLDDLLVPSYSYLNETLYDVDLVERILGHFLDTLEQSNTAIVEVDGKSPSLMLVGKLIDGFLAEIASDANLKSDKFYNLAISLPDQARLYDDGLYRAVDVYLKAHPWVSEAEREKICGVMDCQKLTLEACTHAAQNERLPLRAVVQVLFFEQLQLRHAIAGTLLAAQSPSTSQSTEPRPSAAIRNLTITEEDGDEAEGERQVDAGKWKKTVRENQVLRLDMDTMRTRVHRLERECSNMKKVIAKIDKEGSSPATTTDRPRSWSITKKFGCKFKTQVCDSHEATMVDHRSRRS</sequence>
<name>Y5656_ARATH</name>
<gene>
    <name type="ordered locus">At5g66560</name>
    <name type="ORF">K1F13.23</name>
</gene>
<feature type="chain" id="PRO_0000409587" description="BTB/POZ domain-containing protein At5g66560">
    <location>
        <begin position="1"/>
        <end position="668"/>
    </location>
</feature>
<feature type="domain" description="BTB" evidence="3">
    <location>
        <begin position="21"/>
        <end position="133"/>
    </location>
</feature>
<feature type="domain" description="NPH3" evidence="4">
    <location>
        <begin position="254"/>
        <end position="530"/>
    </location>
</feature>
<feature type="region of interest" description="Disordered" evidence="5">
    <location>
        <begin position="73"/>
        <end position="98"/>
    </location>
</feature>
<feature type="compositionally biased region" description="Basic and acidic residues" evidence="5">
    <location>
        <begin position="73"/>
        <end position="84"/>
    </location>
</feature>
<feature type="compositionally biased region" description="Acidic residues" evidence="5">
    <location>
        <begin position="85"/>
        <end position="98"/>
    </location>
</feature>
<feature type="modified residue" description="Phosphotyrosine" evidence="2">
    <location>
        <position position="471"/>
    </location>
</feature>
<feature type="sequence conflict" description="In Ref. 3; AAK83642/AAN46836." evidence="7" ref="3">
    <original>D</original>
    <variation>G</variation>
    <location>
        <position position="408"/>
    </location>
</feature>
<protein>
    <recommendedName>
        <fullName>BTB/POZ domain-containing protein At5g66560</fullName>
    </recommendedName>
</protein>
<reference key="1">
    <citation type="journal article" date="1998" name="DNA Res.">
        <title>Structural analysis of Arabidopsis thaliana chromosome 5. VI. Sequence features of the regions of 1,367,185 bp covered by 19 physically assigned P1 and TAC clones.</title>
        <authorList>
            <person name="Kotani H."/>
            <person name="Nakamura Y."/>
            <person name="Sato S."/>
            <person name="Asamizu E."/>
            <person name="Kaneko T."/>
            <person name="Miyajima N."/>
            <person name="Tabata S."/>
        </authorList>
    </citation>
    <scope>NUCLEOTIDE SEQUENCE [LARGE SCALE GENOMIC DNA]</scope>
    <source>
        <strain>cv. Columbia</strain>
    </source>
</reference>
<reference key="2">
    <citation type="journal article" date="2017" name="Plant J.">
        <title>Araport11: a complete reannotation of the Arabidopsis thaliana reference genome.</title>
        <authorList>
            <person name="Cheng C.Y."/>
            <person name="Krishnakumar V."/>
            <person name="Chan A.P."/>
            <person name="Thibaud-Nissen F."/>
            <person name="Schobel S."/>
            <person name="Town C.D."/>
        </authorList>
    </citation>
    <scope>GENOME REANNOTATION</scope>
    <source>
        <strain>cv. Columbia</strain>
    </source>
</reference>
<reference key="3">
    <citation type="journal article" date="2003" name="Science">
        <title>Empirical analysis of transcriptional activity in the Arabidopsis genome.</title>
        <authorList>
            <person name="Yamada K."/>
            <person name="Lim J."/>
            <person name="Dale J.M."/>
            <person name="Chen H."/>
            <person name="Shinn P."/>
            <person name="Palm C.J."/>
            <person name="Southwick A.M."/>
            <person name="Wu H.C."/>
            <person name="Kim C.J."/>
            <person name="Nguyen M."/>
            <person name="Pham P.K."/>
            <person name="Cheuk R.F."/>
            <person name="Karlin-Newmann G."/>
            <person name="Liu S.X."/>
            <person name="Lam B."/>
            <person name="Sakano H."/>
            <person name="Wu T."/>
            <person name="Yu G."/>
            <person name="Miranda M."/>
            <person name="Quach H.L."/>
            <person name="Tripp M."/>
            <person name="Chang C.H."/>
            <person name="Lee J.M."/>
            <person name="Toriumi M.J."/>
            <person name="Chan M.M."/>
            <person name="Tang C.C."/>
            <person name="Onodera C.S."/>
            <person name="Deng J.M."/>
            <person name="Akiyama K."/>
            <person name="Ansari Y."/>
            <person name="Arakawa T."/>
            <person name="Banh J."/>
            <person name="Banno F."/>
            <person name="Bowser L."/>
            <person name="Brooks S.Y."/>
            <person name="Carninci P."/>
            <person name="Chao Q."/>
            <person name="Choy N."/>
            <person name="Enju A."/>
            <person name="Goldsmith A.D."/>
            <person name="Gurjal M."/>
            <person name="Hansen N.F."/>
            <person name="Hayashizaki Y."/>
            <person name="Johnson-Hopson C."/>
            <person name="Hsuan V.W."/>
            <person name="Iida K."/>
            <person name="Karnes M."/>
            <person name="Khan S."/>
            <person name="Koesema E."/>
            <person name="Ishida J."/>
            <person name="Jiang P.X."/>
            <person name="Jones T."/>
            <person name="Kawai J."/>
            <person name="Kamiya A."/>
            <person name="Meyers C."/>
            <person name="Nakajima M."/>
            <person name="Narusaka M."/>
            <person name="Seki M."/>
            <person name="Sakurai T."/>
            <person name="Satou M."/>
            <person name="Tamse R."/>
            <person name="Vaysberg M."/>
            <person name="Wallender E.K."/>
            <person name="Wong C."/>
            <person name="Yamamura Y."/>
            <person name="Yuan S."/>
            <person name="Shinozaki K."/>
            <person name="Davis R.W."/>
            <person name="Theologis A."/>
            <person name="Ecker J.R."/>
        </authorList>
    </citation>
    <scope>NUCLEOTIDE SEQUENCE [LARGE SCALE MRNA]</scope>
    <source>
        <strain>cv. Columbia</strain>
    </source>
</reference>
<reference key="4">
    <citation type="journal article" date="2005" name="J. Biol. Chem.">
        <title>Cullins 3a and 3b assemble with members of the broad complex/tramtrack/bric-a-brac (BTB) protein family to form essential ubiquitin-protein ligases (E3s) in Arabidopsis.</title>
        <authorList>
            <person name="Gingerich D.J."/>
            <person name="Gagne J.M."/>
            <person name="Salter D.W."/>
            <person name="Hellmann H."/>
            <person name="Estelle M."/>
            <person name="Ma L."/>
            <person name="Vierstra R.D."/>
        </authorList>
    </citation>
    <scope>DOMAIN BTB</scope>
</reference>
<keyword id="KW-0597">Phosphoprotein</keyword>
<keyword id="KW-1185">Reference proteome</keyword>
<keyword id="KW-0833">Ubl conjugation pathway</keyword>
<accession>Q94A73</accession>
<accession>F4K0M8</accession>
<accession>Q9FJY3</accession>
<proteinExistence type="evidence at transcript level"/>